<name>YOU2_CAEEL</name>
<keyword id="KW-0963">Cytoplasm</keyword>
<keyword id="KW-1185">Reference proteome</keyword>
<proteinExistence type="inferred from homology"/>
<sequence>MSNSTMEATQMKVKLAVDEMIDDLDKTYLRDMQKSMFQCSARCCDNKKTTRDAVENCVESCNDGMKKAQGYLEKELGGLQDQLSRCAMTCYDKLVQQFGPDVNKYSESQKLSFNEKLDSCVSVCADDHIKLIPAIKKRFAKNT</sequence>
<dbReference type="EMBL" id="Z11115">
    <property type="protein sequence ID" value="CAA77449.2"/>
    <property type="molecule type" value="Genomic_DNA"/>
</dbReference>
<dbReference type="PIR" id="S15787">
    <property type="entry name" value="S15787"/>
</dbReference>
<dbReference type="RefSeq" id="NP_001379046.1">
    <property type="nucleotide sequence ID" value="NM_001392167.1"/>
</dbReference>
<dbReference type="RefSeq" id="NP_498961.2">
    <property type="nucleotide sequence ID" value="NM_066560.5"/>
</dbReference>
<dbReference type="SMR" id="P30629"/>
<dbReference type="BioGRID" id="41453">
    <property type="interactions" value="5"/>
</dbReference>
<dbReference type="FunCoup" id="P30629">
    <property type="interactions" value="2643"/>
</dbReference>
<dbReference type="STRING" id="6239.ZK637.2.1"/>
<dbReference type="PaxDb" id="6239-ZK637.2"/>
<dbReference type="PeptideAtlas" id="P30629"/>
<dbReference type="EnsemblMetazoa" id="ZK637.2.1">
    <property type="protein sequence ID" value="ZK637.2.1"/>
    <property type="gene ID" value="WBGene00014022"/>
</dbReference>
<dbReference type="GeneID" id="176252"/>
<dbReference type="UCSC" id="ZK637.2">
    <property type="organism name" value="c. elegans"/>
</dbReference>
<dbReference type="AGR" id="WB:WBGene00014022"/>
<dbReference type="WormBase" id="ZK637.2">
    <property type="protein sequence ID" value="CE32292"/>
    <property type="gene ID" value="WBGene00014022"/>
    <property type="gene designation" value="famh-136"/>
</dbReference>
<dbReference type="eggNOG" id="KOG3377">
    <property type="taxonomic scope" value="Eukaryota"/>
</dbReference>
<dbReference type="GeneTree" id="ENSGT00390000006707"/>
<dbReference type="HOGENOM" id="CLU_110442_1_0_1"/>
<dbReference type="InParanoid" id="P30629"/>
<dbReference type="OMA" id="NRCGMTC"/>
<dbReference type="OrthoDB" id="9975421at2759"/>
<dbReference type="PhylomeDB" id="P30629"/>
<dbReference type="PRO" id="PR:P30629"/>
<dbReference type="Proteomes" id="UP000001940">
    <property type="component" value="Chromosome III"/>
</dbReference>
<dbReference type="Bgee" id="WBGene00014022">
    <property type="expression patterns" value="Expressed in larva and 4 other cell types or tissues"/>
</dbReference>
<dbReference type="GO" id="GO:0005737">
    <property type="term" value="C:cytoplasm"/>
    <property type="evidence" value="ECO:0007005"/>
    <property type="project" value="WormBase"/>
</dbReference>
<dbReference type="GO" id="GO:0055120">
    <property type="term" value="C:striated muscle dense body"/>
    <property type="evidence" value="ECO:0007005"/>
    <property type="project" value="WormBase"/>
</dbReference>
<dbReference type="InterPro" id="IPR008560">
    <property type="entry name" value="DUF842_euk"/>
</dbReference>
<dbReference type="PANTHER" id="PTHR21096">
    <property type="entry name" value="PROTEIN FAM136A"/>
    <property type="match status" value="1"/>
</dbReference>
<dbReference type="PANTHER" id="PTHR21096:SF0">
    <property type="entry name" value="PROTEIN FAM136A"/>
    <property type="match status" value="1"/>
</dbReference>
<dbReference type="Pfam" id="PF05811">
    <property type="entry name" value="DUF842"/>
    <property type="match status" value="1"/>
</dbReference>
<comment type="function">
    <text evidence="2">May play a role in locomotion and behavior.</text>
</comment>
<comment type="subcellular location">
    <subcellularLocation>
        <location evidence="1">Cytoplasm</location>
    </subcellularLocation>
</comment>
<comment type="similarity">
    <text evidence="3">Belongs to the FAM136 family.</text>
</comment>
<feature type="chain" id="PRO_0000065528" description="FAM161 homolog famh-136">
    <location>
        <begin position="1"/>
        <end position="143"/>
    </location>
</feature>
<evidence type="ECO:0000269" key="1">
    <source>
    </source>
</evidence>
<evidence type="ECO:0000269" key="2">
    <source>
    </source>
</evidence>
<evidence type="ECO:0000305" key="3"/>
<evidence type="ECO:0000312" key="4">
    <source>
        <dbReference type="WormBase" id="ZK637.2"/>
    </source>
</evidence>
<reference key="1">
    <citation type="journal article" date="1992" name="Nature">
        <title>The C. elegans genome sequencing project: a beginning.</title>
        <authorList>
            <person name="Sulston J."/>
            <person name="Du Z."/>
            <person name="Thomas K."/>
            <person name="Wilson R."/>
            <person name="Hillier L."/>
            <person name="Staden R."/>
            <person name="Halloran N."/>
            <person name="Green P."/>
            <person name="Thierry-Mieg J."/>
            <person name="Qiu L."/>
            <person name="Dear S."/>
            <person name="Coulson A."/>
            <person name="Craxton M."/>
            <person name="Durbin R."/>
            <person name="Berks M."/>
            <person name="Metzstein M."/>
            <person name="Hawkins T."/>
            <person name="Ainscough R."/>
            <person name="Waterston R."/>
        </authorList>
    </citation>
    <scope>NUCLEOTIDE SEQUENCE [LARGE SCALE GENOMIC DNA]</scope>
    <source>
        <strain>Bristol N2</strain>
    </source>
</reference>
<reference key="2">
    <citation type="journal article" date="1998" name="Science">
        <title>Genome sequence of the nematode C. elegans: a platform for investigating biology.</title>
        <authorList>
            <consortium name="The C. elegans sequencing consortium"/>
        </authorList>
    </citation>
    <scope>NUCLEOTIDE SEQUENCE [LARGE SCALE GENOMIC DNA]</scope>
    <source>
        <strain>Bristol N2</strain>
    </source>
</reference>
<reference key="3">
    <citation type="journal article" date="2011" name="PLoS ONE">
        <title>Determining the sub-cellular localization of proteins within Caenorhabditis elegans body wall muscle.</title>
        <authorList>
            <person name="Meissner B."/>
            <person name="Rogalski T."/>
            <person name="Viveiros R."/>
            <person name="Warner A."/>
            <person name="Plastino L."/>
            <person name="Lorch A."/>
            <person name="Granger L."/>
            <person name="Segalat L."/>
            <person name="Moerman D.G."/>
        </authorList>
    </citation>
    <scope>SUBCELLULAR LOCATION</scope>
</reference>
<reference key="4">
    <citation type="journal article" date="2022" name="MicroPubl. Biol.">
        <title>Loss of famh-136/ FAM136A results in minor locomotion and behavioral changes in Caenorhabditis elegans.</title>
        <authorList>
            <person name="Tan C.H."/>
            <person name="Park H."/>
            <person name="Sternberg P.W."/>
        </authorList>
    </citation>
    <scope>FUNCTION</scope>
</reference>
<accession>P30629</accession>
<gene>
    <name evidence="4" type="primary">famh-136</name>
    <name type="ORF">ZK637.2</name>
</gene>
<organism>
    <name type="scientific">Caenorhabditis elegans</name>
    <dbReference type="NCBI Taxonomy" id="6239"/>
    <lineage>
        <taxon>Eukaryota</taxon>
        <taxon>Metazoa</taxon>
        <taxon>Ecdysozoa</taxon>
        <taxon>Nematoda</taxon>
        <taxon>Chromadorea</taxon>
        <taxon>Rhabditida</taxon>
        <taxon>Rhabditina</taxon>
        <taxon>Rhabditomorpha</taxon>
        <taxon>Rhabditoidea</taxon>
        <taxon>Rhabditidae</taxon>
        <taxon>Peloderinae</taxon>
        <taxon>Caenorhabditis</taxon>
    </lineage>
</organism>
<protein>
    <recommendedName>
        <fullName evidence="4">FAM161 homolog famh-136</fullName>
    </recommendedName>
</protein>